<proteinExistence type="inferred from homology"/>
<organism>
    <name type="scientific">Borreliella afzelii (strain PKo)</name>
    <name type="common">Borrelia afzelii</name>
    <dbReference type="NCBI Taxonomy" id="390236"/>
    <lineage>
        <taxon>Bacteria</taxon>
        <taxon>Pseudomonadati</taxon>
        <taxon>Spirochaetota</taxon>
        <taxon>Spirochaetia</taxon>
        <taxon>Spirochaetales</taxon>
        <taxon>Borreliaceae</taxon>
        <taxon>Borreliella</taxon>
    </lineage>
</organism>
<comment type="function">
    <text evidence="1">An essential GTPase which binds GTP, GDP and possibly (p)ppGpp with moderate affinity, with high nucleotide exchange rates and a fairly low GTP hydrolysis rate. Plays a role in control of the cell cycle, stress response, ribosome biogenesis and in those bacteria that undergo differentiation, in morphogenesis control.</text>
</comment>
<comment type="cofactor">
    <cofactor evidence="1">
        <name>Mg(2+)</name>
        <dbReference type="ChEBI" id="CHEBI:18420"/>
    </cofactor>
</comment>
<comment type="subunit">
    <text evidence="1">Monomer.</text>
</comment>
<comment type="subcellular location">
    <subcellularLocation>
        <location evidence="1">Cytoplasm</location>
    </subcellularLocation>
</comment>
<comment type="similarity">
    <text evidence="1">Belongs to the TRAFAC class OBG-HflX-like GTPase superfamily. OBG GTPase family.</text>
</comment>
<feature type="chain" id="PRO_0000385753" description="GTPase Obg">
    <location>
        <begin position="1"/>
        <end position="328"/>
    </location>
</feature>
<feature type="domain" description="Obg" evidence="2">
    <location>
        <begin position="2"/>
        <end position="160"/>
    </location>
</feature>
<feature type="domain" description="OBG-type G" evidence="1">
    <location>
        <begin position="161"/>
        <end position="326"/>
    </location>
</feature>
<feature type="binding site" evidence="1">
    <location>
        <begin position="167"/>
        <end position="174"/>
    </location>
    <ligand>
        <name>GTP</name>
        <dbReference type="ChEBI" id="CHEBI:37565"/>
    </ligand>
</feature>
<feature type="binding site" evidence="1">
    <location>
        <position position="174"/>
    </location>
    <ligand>
        <name>Mg(2+)</name>
        <dbReference type="ChEBI" id="CHEBI:18420"/>
    </ligand>
</feature>
<feature type="binding site" evidence="1">
    <location>
        <begin position="192"/>
        <end position="196"/>
    </location>
    <ligand>
        <name>GTP</name>
        <dbReference type="ChEBI" id="CHEBI:37565"/>
    </ligand>
</feature>
<feature type="binding site" evidence="1">
    <location>
        <position position="194"/>
    </location>
    <ligand>
        <name>Mg(2+)</name>
        <dbReference type="ChEBI" id="CHEBI:18420"/>
    </ligand>
</feature>
<feature type="binding site" evidence="1">
    <location>
        <begin position="213"/>
        <end position="216"/>
    </location>
    <ligand>
        <name>GTP</name>
        <dbReference type="ChEBI" id="CHEBI:37565"/>
    </ligand>
</feature>
<feature type="binding site" evidence="1">
    <location>
        <begin position="280"/>
        <end position="283"/>
    </location>
    <ligand>
        <name>GTP</name>
        <dbReference type="ChEBI" id="CHEBI:37565"/>
    </ligand>
</feature>
<feature type="binding site" evidence="1">
    <location>
        <begin position="307"/>
        <end position="309"/>
    </location>
    <ligand>
        <name>GTP</name>
        <dbReference type="ChEBI" id="CHEBI:37565"/>
    </ligand>
</feature>
<dbReference type="EC" id="3.6.5.-" evidence="1"/>
<dbReference type="EMBL" id="CP000395">
    <property type="protein sequence ID" value="ABH02055.1"/>
    <property type="molecule type" value="Genomic_DNA"/>
</dbReference>
<dbReference type="EMBL" id="CP002933">
    <property type="protein sequence ID" value="AEL69997.1"/>
    <property type="molecule type" value="Genomic_DNA"/>
</dbReference>
<dbReference type="SMR" id="Q0SM73"/>
<dbReference type="STRING" id="29518.BLA32_00320"/>
<dbReference type="KEGG" id="baf:BAPKO_0830"/>
<dbReference type="KEGG" id="bafz:BafPKo_0807"/>
<dbReference type="PATRIC" id="fig|390236.22.peg.770"/>
<dbReference type="eggNOG" id="COG0536">
    <property type="taxonomic scope" value="Bacteria"/>
</dbReference>
<dbReference type="HOGENOM" id="CLU_011747_2_0_12"/>
<dbReference type="OrthoDB" id="9807318at2"/>
<dbReference type="Proteomes" id="UP000005216">
    <property type="component" value="Chromosome"/>
</dbReference>
<dbReference type="GO" id="GO:0005737">
    <property type="term" value="C:cytoplasm"/>
    <property type="evidence" value="ECO:0007669"/>
    <property type="project" value="UniProtKB-SubCell"/>
</dbReference>
<dbReference type="GO" id="GO:0005525">
    <property type="term" value="F:GTP binding"/>
    <property type="evidence" value="ECO:0007669"/>
    <property type="project" value="UniProtKB-UniRule"/>
</dbReference>
<dbReference type="GO" id="GO:0003924">
    <property type="term" value="F:GTPase activity"/>
    <property type="evidence" value="ECO:0007669"/>
    <property type="project" value="UniProtKB-UniRule"/>
</dbReference>
<dbReference type="GO" id="GO:0000287">
    <property type="term" value="F:magnesium ion binding"/>
    <property type="evidence" value="ECO:0007669"/>
    <property type="project" value="InterPro"/>
</dbReference>
<dbReference type="GO" id="GO:0042254">
    <property type="term" value="P:ribosome biogenesis"/>
    <property type="evidence" value="ECO:0007669"/>
    <property type="project" value="UniProtKB-UniRule"/>
</dbReference>
<dbReference type="CDD" id="cd01898">
    <property type="entry name" value="Obg"/>
    <property type="match status" value="1"/>
</dbReference>
<dbReference type="FunFam" id="2.70.210.12:FF:000001">
    <property type="entry name" value="GTPase Obg"/>
    <property type="match status" value="1"/>
</dbReference>
<dbReference type="Gene3D" id="2.70.210.12">
    <property type="entry name" value="GTP1/OBG domain"/>
    <property type="match status" value="1"/>
</dbReference>
<dbReference type="Gene3D" id="3.40.50.300">
    <property type="entry name" value="P-loop containing nucleotide triphosphate hydrolases"/>
    <property type="match status" value="1"/>
</dbReference>
<dbReference type="HAMAP" id="MF_01454">
    <property type="entry name" value="GTPase_Obg"/>
    <property type="match status" value="1"/>
</dbReference>
<dbReference type="InterPro" id="IPR031167">
    <property type="entry name" value="G_OBG"/>
</dbReference>
<dbReference type="InterPro" id="IPR006073">
    <property type="entry name" value="GTP-bd"/>
</dbReference>
<dbReference type="InterPro" id="IPR014100">
    <property type="entry name" value="GTP-bd_Obg/CgtA"/>
</dbReference>
<dbReference type="InterPro" id="IPR006074">
    <property type="entry name" value="GTP1-OBG_CS"/>
</dbReference>
<dbReference type="InterPro" id="IPR006169">
    <property type="entry name" value="GTP1_OBG_dom"/>
</dbReference>
<dbReference type="InterPro" id="IPR036726">
    <property type="entry name" value="GTP1_OBG_dom_sf"/>
</dbReference>
<dbReference type="InterPro" id="IPR045086">
    <property type="entry name" value="OBG_GTPase"/>
</dbReference>
<dbReference type="InterPro" id="IPR027417">
    <property type="entry name" value="P-loop_NTPase"/>
</dbReference>
<dbReference type="InterPro" id="IPR005225">
    <property type="entry name" value="Small_GTP-bd"/>
</dbReference>
<dbReference type="NCBIfam" id="TIGR02729">
    <property type="entry name" value="Obg_CgtA"/>
    <property type="match status" value="1"/>
</dbReference>
<dbReference type="NCBIfam" id="NF008956">
    <property type="entry name" value="PRK12299.1"/>
    <property type="match status" value="1"/>
</dbReference>
<dbReference type="NCBIfam" id="TIGR00231">
    <property type="entry name" value="small_GTP"/>
    <property type="match status" value="1"/>
</dbReference>
<dbReference type="PANTHER" id="PTHR11702">
    <property type="entry name" value="DEVELOPMENTALLY REGULATED GTP-BINDING PROTEIN-RELATED"/>
    <property type="match status" value="1"/>
</dbReference>
<dbReference type="PANTHER" id="PTHR11702:SF31">
    <property type="entry name" value="MITOCHONDRIAL RIBOSOME-ASSOCIATED GTPASE 2"/>
    <property type="match status" value="1"/>
</dbReference>
<dbReference type="Pfam" id="PF01018">
    <property type="entry name" value="GTP1_OBG"/>
    <property type="match status" value="1"/>
</dbReference>
<dbReference type="Pfam" id="PF01926">
    <property type="entry name" value="MMR_HSR1"/>
    <property type="match status" value="1"/>
</dbReference>
<dbReference type="PIRSF" id="PIRSF002401">
    <property type="entry name" value="GTP_bd_Obg/CgtA"/>
    <property type="match status" value="1"/>
</dbReference>
<dbReference type="PRINTS" id="PR00326">
    <property type="entry name" value="GTP1OBG"/>
</dbReference>
<dbReference type="SUPFAM" id="SSF82051">
    <property type="entry name" value="Obg GTP-binding protein N-terminal domain"/>
    <property type="match status" value="1"/>
</dbReference>
<dbReference type="SUPFAM" id="SSF52540">
    <property type="entry name" value="P-loop containing nucleoside triphosphate hydrolases"/>
    <property type="match status" value="1"/>
</dbReference>
<dbReference type="PROSITE" id="PS51710">
    <property type="entry name" value="G_OBG"/>
    <property type="match status" value="1"/>
</dbReference>
<dbReference type="PROSITE" id="PS00905">
    <property type="entry name" value="GTP1_OBG"/>
    <property type="match status" value="1"/>
</dbReference>
<dbReference type="PROSITE" id="PS51883">
    <property type="entry name" value="OBG"/>
    <property type="match status" value="1"/>
</dbReference>
<sequence length="328" mass="35823">MYNFKDSVSITVVSGNGGSGCVSFLREKFNAKGGPDGGNGGSGGSVIFKVRENLRTLSFYKNGHVLCAKNGQPGMGFKRSGANGKDLILFVPPNTDIYNENDGTLLCRLENLNDEFVILKGGRGGLGNWNFKTSVRRAPRFAQPGESGNSLNVRLELFLVADIGLVGLPNAGKSSLLNRITSAKSRVANYPFTTKIPHLGILRYSYDDLIIADIPGIIKGASFGVGLGTKFLKHISKTKILALVIDISEANFLESYNILLNELKTYSYNLFYKKKIIIANKLDLDSSKKNFDCLIKALGKEKIVGISIYENKGIDELIKEFFVLAKTF</sequence>
<evidence type="ECO:0000255" key="1">
    <source>
        <dbReference type="HAMAP-Rule" id="MF_01454"/>
    </source>
</evidence>
<evidence type="ECO:0000255" key="2">
    <source>
        <dbReference type="PROSITE-ProRule" id="PRU01231"/>
    </source>
</evidence>
<accession>Q0SM73</accession>
<accession>G0IRW2</accession>
<name>OBG_BORAP</name>
<protein>
    <recommendedName>
        <fullName evidence="1">GTPase Obg</fullName>
        <ecNumber evidence="1">3.6.5.-</ecNumber>
    </recommendedName>
    <alternativeName>
        <fullName evidence="1">GTP-binding protein Obg</fullName>
    </alternativeName>
</protein>
<gene>
    <name evidence="1" type="primary">obg</name>
    <name type="ordered locus">BAPKO_0830</name>
    <name type="ordered locus">BafPKo_0807</name>
</gene>
<reference key="1">
    <citation type="journal article" date="2006" name="BMC Genomics">
        <title>Comparative genome analysis: selection pressure on the Borrelia vls cassettes is essential for infectivity.</title>
        <authorList>
            <person name="Gloeckner G."/>
            <person name="Schulte-Spechtel U."/>
            <person name="Schilhabel M."/>
            <person name="Felder M."/>
            <person name="Suehnel J."/>
            <person name="Wilske B."/>
            <person name="Platzer M."/>
        </authorList>
    </citation>
    <scope>NUCLEOTIDE SEQUENCE [LARGE SCALE GENOMIC DNA]</scope>
    <source>
        <strain>PKo</strain>
    </source>
</reference>
<reference key="2">
    <citation type="journal article" date="2011" name="J. Bacteriol.">
        <title>Whole-genome sequences of two Borrelia afzelii and two Borrelia garinii Lyme disease agent isolates.</title>
        <authorList>
            <person name="Casjens S.R."/>
            <person name="Mongodin E.F."/>
            <person name="Qiu W.G."/>
            <person name="Dunn J.J."/>
            <person name="Luft B.J."/>
            <person name="Fraser-Liggett C.M."/>
            <person name="Schutzer S.E."/>
        </authorList>
    </citation>
    <scope>NUCLEOTIDE SEQUENCE [LARGE SCALE GENOMIC DNA]</scope>
    <source>
        <strain>PKo</strain>
    </source>
</reference>
<keyword id="KW-0963">Cytoplasm</keyword>
<keyword id="KW-0342">GTP-binding</keyword>
<keyword id="KW-0378">Hydrolase</keyword>
<keyword id="KW-0460">Magnesium</keyword>
<keyword id="KW-0479">Metal-binding</keyword>
<keyword id="KW-0547">Nucleotide-binding</keyword>